<reference key="1">
    <citation type="journal article" date="2009" name="Stand. Genomic Sci.">
        <title>Complete genome sequence of Beutenbergia cavernae type strain (HKI 0122).</title>
        <authorList>
            <person name="Land M."/>
            <person name="Pukall R."/>
            <person name="Abt B."/>
            <person name="Goker M."/>
            <person name="Rohde M."/>
            <person name="Glavina Del Rio T."/>
            <person name="Tice H."/>
            <person name="Copeland A."/>
            <person name="Cheng J.F."/>
            <person name="Lucas S."/>
            <person name="Chen F."/>
            <person name="Nolan M."/>
            <person name="Bruce D."/>
            <person name="Goodwin L."/>
            <person name="Pitluck S."/>
            <person name="Ivanova N."/>
            <person name="Mavromatis K."/>
            <person name="Ovchinnikova G."/>
            <person name="Pati A."/>
            <person name="Chen A."/>
            <person name="Palaniappan K."/>
            <person name="Hauser L."/>
            <person name="Chang Y.J."/>
            <person name="Jefferies C.C."/>
            <person name="Saunders E."/>
            <person name="Brettin T."/>
            <person name="Detter J.C."/>
            <person name="Han C."/>
            <person name="Chain P."/>
            <person name="Bristow J."/>
            <person name="Eisen J.A."/>
            <person name="Markowitz V."/>
            <person name="Hugenholtz P."/>
            <person name="Kyrpides N.C."/>
            <person name="Klenk H.P."/>
            <person name="Lapidus A."/>
        </authorList>
    </citation>
    <scope>NUCLEOTIDE SEQUENCE [LARGE SCALE GENOMIC DNA]</scope>
    <source>
        <strain>ATCC BAA-8 / DSM 12333 / CCUG 43141 / JCM 11478 / NBRC 16432 / NCIMB 13614 / HKI 0122</strain>
    </source>
</reference>
<organism>
    <name type="scientific">Beutenbergia cavernae (strain ATCC BAA-8 / DSM 12333 / CCUG 43141 / JCM 11478 / NBRC 16432 / NCIMB 13614 / HKI 0122)</name>
    <dbReference type="NCBI Taxonomy" id="471853"/>
    <lineage>
        <taxon>Bacteria</taxon>
        <taxon>Bacillati</taxon>
        <taxon>Actinomycetota</taxon>
        <taxon>Actinomycetes</taxon>
        <taxon>Micrococcales</taxon>
        <taxon>Beutenbergiaceae</taxon>
        <taxon>Beutenbergia</taxon>
    </lineage>
</organism>
<feature type="chain" id="PRO_1000212107" description="Co-chaperonin GroES">
    <location>
        <begin position="1"/>
        <end position="98"/>
    </location>
</feature>
<accession>C5BZX2</accession>
<protein>
    <recommendedName>
        <fullName evidence="1">Co-chaperonin GroES</fullName>
    </recommendedName>
    <alternativeName>
        <fullName evidence="1">10 kDa chaperonin</fullName>
    </alternativeName>
    <alternativeName>
        <fullName evidence="1">Chaperonin-10</fullName>
        <shortName evidence="1">Cpn10</shortName>
    </alternativeName>
</protein>
<comment type="function">
    <text evidence="1">Together with the chaperonin GroEL, plays an essential role in assisting protein folding. The GroEL-GroES system forms a nano-cage that allows encapsulation of the non-native substrate proteins and provides a physical environment optimized to promote and accelerate protein folding. GroES binds to the apical surface of the GroEL ring, thereby capping the opening of the GroEL channel.</text>
</comment>
<comment type="subunit">
    <text evidence="1">Heptamer of 7 subunits arranged in a ring. Interacts with the chaperonin GroEL.</text>
</comment>
<comment type="subcellular location">
    <subcellularLocation>
        <location evidence="1">Cytoplasm</location>
    </subcellularLocation>
</comment>
<comment type="similarity">
    <text evidence="1">Belongs to the GroES chaperonin family.</text>
</comment>
<keyword id="KW-0143">Chaperone</keyword>
<keyword id="KW-0963">Cytoplasm</keyword>
<keyword id="KW-1185">Reference proteome</keyword>
<name>CH10_BEUC1</name>
<proteinExistence type="inferred from homology"/>
<dbReference type="EMBL" id="CP001618">
    <property type="protein sequence ID" value="ACQ81302.1"/>
    <property type="molecule type" value="Genomic_DNA"/>
</dbReference>
<dbReference type="RefSeq" id="WP_015883542.1">
    <property type="nucleotide sequence ID" value="NC_012669.1"/>
</dbReference>
<dbReference type="SMR" id="C5BZX2"/>
<dbReference type="STRING" id="471853.Bcav_3058"/>
<dbReference type="KEGG" id="bcv:Bcav_3058"/>
<dbReference type="eggNOG" id="COG0234">
    <property type="taxonomic scope" value="Bacteria"/>
</dbReference>
<dbReference type="HOGENOM" id="CLU_132825_2_0_11"/>
<dbReference type="OrthoDB" id="9806791at2"/>
<dbReference type="Proteomes" id="UP000007962">
    <property type="component" value="Chromosome"/>
</dbReference>
<dbReference type="GO" id="GO:0005737">
    <property type="term" value="C:cytoplasm"/>
    <property type="evidence" value="ECO:0007669"/>
    <property type="project" value="UniProtKB-SubCell"/>
</dbReference>
<dbReference type="GO" id="GO:0005524">
    <property type="term" value="F:ATP binding"/>
    <property type="evidence" value="ECO:0007669"/>
    <property type="project" value="InterPro"/>
</dbReference>
<dbReference type="GO" id="GO:0046872">
    <property type="term" value="F:metal ion binding"/>
    <property type="evidence" value="ECO:0007669"/>
    <property type="project" value="TreeGrafter"/>
</dbReference>
<dbReference type="GO" id="GO:0044183">
    <property type="term" value="F:protein folding chaperone"/>
    <property type="evidence" value="ECO:0007669"/>
    <property type="project" value="InterPro"/>
</dbReference>
<dbReference type="GO" id="GO:0051087">
    <property type="term" value="F:protein-folding chaperone binding"/>
    <property type="evidence" value="ECO:0007669"/>
    <property type="project" value="TreeGrafter"/>
</dbReference>
<dbReference type="GO" id="GO:0051082">
    <property type="term" value="F:unfolded protein binding"/>
    <property type="evidence" value="ECO:0007669"/>
    <property type="project" value="TreeGrafter"/>
</dbReference>
<dbReference type="GO" id="GO:0051085">
    <property type="term" value="P:chaperone cofactor-dependent protein refolding"/>
    <property type="evidence" value="ECO:0007669"/>
    <property type="project" value="TreeGrafter"/>
</dbReference>
<dbReference type="CDD" id="cd00320">
    <property type="entry name" value="cpn10"/>
    <property type="match status" value="1"/>
</dbReference>
<dbReference type="FunFam" id="2.30.33.40:FF:000001">
    <property type="entry name" value="10 kDa chaperonin"/>
    <property type="match status" value="1"/>
</dbReference>
<dbReference type="Gene3D" id="2.30.33.40">
    <property type="entry name" value="GroES chaperonin"/>
    <property type="match status" value="1"/>
</dbReference>
<dbReference type="HAMAP" id="MF_00580">
    <property type="entry name" value="CH10"/>
    <property type="match status" value="1"/>
</dbReference>
<dbReference type="InterPro" id="IPR020818">
    <property type="entry name" value="Chaperonin_GroES"/>
</dbReference>
<dbReference type="InterPro" id="IPR037124">
    <property type="entry name" value="Chaperonin_GroES_sf"/>
</dbReference>
<dbReference type="InterPro" id="IPR018369">
    <property type="entry name" value="Chaprnonin_Cpn10_CS"/>
</dbReference>
<dbReference type="InterPro" id="IPR011032">
    <property type="entry name" value="GroES-like_sf"/>
</dbReference>
<dbReference type="NCBIfam" id="NF001527">
    <property type="entry name" value="PRK00364.1-2"/>
    <property type="match status" value="1"/>
</dbReference>
<dbReference type="NCBIfam" id="NF001530">
    <property type="entry name" value="PRK00364.1-6"/>
    <property type="match status" value="1"/>
</dbReference>
<dbReference type="NCBIfam" id="NF001531">
    <property type="entry name" value="PRK00364.2-2"/>
    <property type="match status" value="1"/>
</dbReference>
<dbReference type="NCBIfam" id="NF001533">
    <property type="entry name" value="PRK00364.2-4"/>
    <property type="match status" value="1"/>
</dbReference>
<dbReference type="NCBIfam" id="NF001534">
    <property type="entry name" value="PRK00364.2-5"/>
    <property type="match status" value="1"/>
</dbReference>
<dbReference type="PANTHER" id="PTHR10772">
    <property type="entry name" value="10 KDA HEAT SHOCK PROTEIN"/>
    <property type="match status" value="1"/>
</dbReference>
<dbReference type="PANTHER" id="PTHR10772:SF58">
    <property type="entry name" value="CO-CHAPERONIN GROES"/>
    <property type="match status" value="1"/>
</dbReference>
<dbReference type="Pfam" id="PF00166">
    <property type="entry name" value="Cpn10"/>
    <property type="match status" value="1"/>
</dbReference>
<dbReference type="PRINTS" id="PR00297">
    <property type="entry name" value="CHAPERONIN10"/>
</dbReference>
<dbReference type="SMART" id="SM00883">
    <property type="entry name" value="Cpn10"/>
    <property type="match status" value="1"/>
</dbReference>
<dbReference type="SUPFAM" id="SSF50129">
    <property type="entry name" value="GroES-like"/>
    <property type="match status" value="1"/>
</dbReference>
<dbReference type="PROSITE" id="PS00681">
    <property type="entry name" value="CHAPERONINS_CPN10"/>
    <property type="match status" value="1"/>
</dbReference>
<sequence length="98" mass="10469">MSVSIKPLEDRIVVKTLEAEQTTASGLVIPDTAKEKPQEGEVLAIGPGRVDDNGNRVPVDVAVGDVVIYSKYGGTEVKYAGQEYLILSARDVLAVVQK</sequence>
<evidence type="ECO:0000255" key="1">
    <source>
        <dbReference type="HAMAP-Rule" id="MF_00580"/>
    </source>
</evidence>
<gene>
    <name evidence="1" type="primary">groES</name>
    <name evidence="1" type="synonym">groS</name>
    <name type="ordered locus">Bcav_3058</name>
</gene>